<protein>
    <recommendedName>
        <fullName evidence="1">UPF0270 protein YheU</fullName>
    </recommendedName>
</protein>
<proteinExistence type="inferred from homology"/>
<name>YHEU_SALNS</name>
<comment type="similarity">
    <text evidence="1">Belongs to the UPF0270 family.</text>
</comment>
<feature type="chain" id="PRO_1000132024" description="UPF0270 protein YheU">
    <location>
        <begin position="1"/>
        <end position="72"/>
    </location>
</feature>
<accession>B4SUW4</accession>
<evidence type="ECO:0000255" key="1">
    <source>
        <dbReference type="HAMAP-Rule" id="MF_00690"/>
    </source>
</evidence>
<reference key="1">
    <citation type="journal article" date="2011" name="J. Bacteriol.">
        <title>Comparative genomics of 28 Salmonella enterica isolates: evidence for CRISPR-mediated adaptive sublineage evolution.</title>
        <authorList>
            <person name="Fricke W.F."/>
            <person name="Mammel M.K."/>
            <person name="McDermott P.F."/>
            <person name="Tartera C."/>
            <person name="White D.G."/>
            <person name="Leclerc J.E."/>
            <person name="Ravel J."/>
            <person name="Cebula T.A."/>
        </authorList>
    </citation>
    <scope>NUCLEOTIDE SEQUENCE [LARGE SCALE GENOMIC DNA]</scope>
    <source>
        <strain>SL254</strain>
    </source>
</reference>
<dbReference type="EMBL" id="CP001113">
    <property type="protein sequence ID" value="ACF62939.1"/>
    <property type="molecule type" value="Genomic_DNA"/>
</dbReference>
<dbReference type="RefSeq" id="WP_000586568.1">
    <property type="nucleotide sequence ID" value="NZ_CCMR01000004.1"/>
</dbReference>
<dbReference type="SMR" id="B4SUW4"/>
<dbReference type="KEGG" id="see:SNSL254_A3734"/>
<dbReference type="HOGENOM" id="CLU_186759_1_0_6"/>
<dbReference type="Proteomes" id="UP000008824">
    <property type="component" value="Chromosome"/>
</dbReference>
<dbReference type="Gene3D" id="1.10.10.610">
    <property type="entry name" value="YehU-like"/>
    <property type="match status" value="1"/>
</dbReference>
<dbReference type="HAMAP" id="MF_00690">
    <property type="entry name" value="UPF0270"/>
    <property type="match status" value="1"/>
</dbReference>
<dbReference type="InterPro" id="IPR010648">
    <property type="entry name" value="UPF0270"/>
</dbReference>
<dbReference type="InterPro" id="IPR036685">
    <property type="entry name" value="YehU-like_sf"/>
</dbReference>
<dbReference type="NCBIfam" id="NF003438">
    <property type="entry name" value="PRK04966.1"/>
    <property type="match status" value="1"/>
</dbReference>
<dbReference type="Pfam" id="PF06794">
    <property type="entry name" value="UPF0270"/>
    <property type="match status" value="1"/>
</dbReference>
<dbReference type="PIRSF" id="PIRSF006169">
    <property type="entry name" value="UCP006169"/>
    <property type="match status" value="1"/>
</dbReference>
<dbReference type="SUPFAM" id="SSF118001">
    <property type="entry name" value="YehU-like"/>
    <property type="match status" value="1"/>
</dbReference>
<sequence length="72" mass="8350">MIIPWQGLAPDTLDNLIESFVLREGTDYGEHERSLEQKVADVKRQLQSGEAVLVWSELHETVNIMPKKQFRE</sequence>
<gene>
    <name evidence="1" type="primary">yheU</name>
    <name type="ordered locus">SNSL254_A3734</name>
</gene>
<organism>
    <name type="scientific">Salmonella newport (strain SL254)</name>
    <dbReference type="NCBI Taxonomy" id="423368"/>
    <lineage>
        <taxon>Bacteria</taxon>
        <taxon>Pseudomonadati</taxon>
        <taxon>Pseudomonadota</taxon>
        <taxon>Gammaproteobacteria</taxon>
        <taxon>Enterobacterales</taxon>
        <taxon>Enterobacteriaceae</taxon>
        <taxon>Salmonella</taxon>
    </lineage>
</organism>